<protein>
    <recommendedName>
        <fullName evidence="1">CinA-like protein</fullName>
    </recommendedName>
</protein>
<feature type="chain" id="PRO_1000058721" description="CinA-like protein">
    <location>
        <begin position="1"/>
        <end position="430"/>
    </location>
</feature>
<reference key="1">
    <citation type="journal article" date="2007" name="PLoS Genet.">
        <title>Patterns and implications of gene gain and loss in the evolution of Prochlorococcus.</title>
        <authorList>
            <person name="Kettler G.C."/>
            <person name="Martiny A.C."/>
            <person name="Huang K."/>
            <person name="Zucker J."/>
            <person name="Coleman M.L."/>
            <person name="Rodrigue S."/>
            <person name="Chen F."/>
            <person name="Lapidus A."/>
            <person name="Ferriera S."/>
            <person name="Johnson J."/>
            <person name="Steglich C."/>
            <person name="Church G.M."/>
            <person name="Richardson P."/>
            <person name="Chisholm S.W."/>
        </authorList>
    </citation>
    <scope>NUCLEOTIDE SEQUENCE [LARGE SCALE GENOMIC DNA]</scope>
    <source>
        <strain>NATL2A</strain>
    </source>
</reference>
<sequence length="430" mass="46803">MKTSKEITINKKNKFGAEILCIGSEILLGNIVNTNSQWIAAQLAILGIPHFRQTVIGDNPARLEEAILEASNRSEILITTGGLGPTPDDIKTKVIADTFKTPLEQRNDILIDLRNKSKDKVSKLSESQKKQSLVPKGAKIINNYSGTAPGIFWSPKENFTILTFPGVPSELKEMWAKEASKLLISNNLSKEVISSKVLHFAGITESLLADKIQHLLISKNPTVATYASTGSVKVRITARGKSSEKTNRLIEPIKKELTQITGLKCFGLDNETLEEIVFKLLLKRKETIAVAESCTGGGIGSKLTKIPGSSQIFHGGVIAYNNSIKQRLLGVPEEIINTHGAVSKQVVESMARGVQIKFKVNWAISVSGIAGPTGGSKSKPVGLVNFCIKGPKTLITWEENFGSNKTREDIQKLSVLNALDRLRLSIIMAN</sequence>
<accession>Q46HB7</accession>
<organism>
    <name type="scientific">Prochlorococcus marinus (strain NATL2A)</name>
    <dbReference type="NCBI Taxonomy" id="59920"/>
    <lineage>
        <taxon>Bacteria</taxon>
        <taxon>Bacillati</taxon>
        <taxon>Cyanobacteriota</taxon>
        <taxon>Cyanophyceae</taxon>
        <taxon>Synechococcales</taxon>
        <taxon>Prochlorococcaceae</taxon>
        <taxon>Prochlorococcus</taxon>
    </lineage>
</organism>
<dbReference type="EMBL" id="CP000095">
    <property type="protein sequence ID" value="AAZ59111.1"/>
    <property type="molecule type" value="Genomic_DNA"/>
</dbReference>
<dbReference type="RefSeq" id="WP_011294256.1">
    <property type="nucleotide sequence ID" value="NC_007335.2"/>
</dbReference>
<dbReference type="SMR" id="Q46HB7"/>
<dbReference type="STRING" id="59920.PMN2A_1623"/>
<dbReference type="KEGG" id="pmn:PMN2A_1623"/>
<dbReference type="HOGENOM" id="CLU_030805_9_3_3"/>
<dbReference type="OrthoDB" id="9801454at2"/>
<dbReference type="PhylomeDB" id="Q46HB7"/>
<dbReference type="Proteomes" id="UP000002535">
    <property type="component" value="Chromosome"/>
</dbReference>
<dbReference type="CDD" id="cd00885">
    <property type="entry name" value="cinA"/>
    <property type="match status" value="1"/>
</dbReference>
<dbReference type="Gene3D" id="3.30.70.2860">
    <property type="match status" value="1"/>
</dbReference>
<dbReference type="Gene3D" id="3.90.950.20">
    <property type="entry name" value="CinA-like"/>
    <property type="match status" value="1"/>
</dbReference>
<dbReference type="Gene3D" id="3.40.980.10">
    <property type="entry name" value="MoaB/Mog-like domain"/>
    <property type="match status" value="1"/>
</dbReference>
<dbReference type="HAMAP" id="MF_00226_B">
    <property type="entry name" value="CinA_B"/>
    <property type="match status" value="1"/>
</dbReference>
<dbReference type="InterPro" id="IPR050101">
    <property type="entry name" value="CinA"/>
</dbReference>
<dbReference type="InterPro" id="IPR036653">
    <property type="entry name" value="CinA-like_C"/>
</dbReference>
<dbReference type="InterPro" id="IPR008136">
    <property type="entry name" value="CinA_C"/>
</dbReference>
<dbReference type="InterPro" id="IPR041424">
    <property type="entry name" value="CinA_KH"/>
</dbReference>
<dbReference type="InterPro" id="IPR008135">
    <property type="entry name" value="Competence-induced_CinA"/>
</dbReference>
<dbReference type="InterPro" id="IPR036425">
    <property type="entry name" value="MoaB/Mog-like_dom_sf"/>
</dbReference>
<dbReference type="InterPro" id="IPR001453">
    <property type="entry name" value="MoaB/Mog_dom"/>
</dbReference>
<dbReference type="NCBIfam" id="TIGR00200">
    <property type="entry name" value="cinA_nterm"/>
    <property type="match status" value="1"/>
</dbReference>
<dbReference type="NCBIfam" id="TIGR00199">
    <property type="entry name" value="PncC_domain"/>
    <property type="match status" value="1"/>
</dbReference>
<dbReference type="NCBIfam" id="NF001813">
    <property type="entry name" value="PRK00549.1"/>
    <property type="match status" value="1"/>
</dbReference>
<dbReference type="PANTHER" id="PTHR13939">
    <property type="entry name" value="NICOTINAMIDE-NUCLEOTIDE AMIDOHYDROLASE PNCC"/>
    <property type="match status" value="1"/>
</dbReference>
<dbReference type="PANTHER" id="PTHR13939:SF0">
    <property type="entry name" value="NMN AMIDOHYDROLASE-LIKE PROTEIN YFAY"/>
    <property type="match status" value="1"/>
</dbReference>
<dbReference type="Pfam" id="PF02464">
    <property type="entry name" value="CinA"/>
    <property type="match status" value="1"/>
</dbReference>
<dbReference type="Pfam" id="PF18146">
    <property type="entry name" value="CinA_KH"/>
    <property type="match status" value="1"/>
</dbReference>
<dbReference type="Pfam" id="PF00994">
    <property type="entry name" value="MoCF_biosynth"/>
    <property type="match status" value="1"/>
</dbReference>
<dbReference type="PIRSF" id="PIRSF006728">
    <property type="entry name" value="CinA"/>
    <property type="match status" value="1"/>
</dbReference>
<dbReference type="SMART" id="SM00852">
    <property type="entry name" value="MoCF_biosynth"/>
    <property type="match status" value="1"/>
</dbReference>
<dbReference type="SUPFAM" id="SSF142433">
    <property type="entry name" value="CinA-like"/>
    <property type="match status" value="1"/>
</dbReference>
<dbReference type="SUPFAM" id="SSF53218">
    <property type="entry name" value="Molybdenum cofactor biosynthesis proteins"/>
    <property type="match status" value="1"/>
</dbReference>
<keyword id="KW-1185">Reference proteome</keyword>
<evidence type="ECO:0000255" key="1">
    <source>
        <dbReference type="HAMAP-Rule" id="MF_00226"/>
    </source>
</evidence>
<gene>
    <name type="ordered locus">PMN2A_1623</name>
</gene>
<proteinExistence type="inferred from homology"/>
<comment type="similarity">
    <text evidence="1">Belongs to the CinA family.</text>
</comment>
<name>CINAL_PROMT</name>